<gene>
    <name type="ordered locus">SCO4941</name>
    <name type="ORF">2SCK31.01c</name>
</gene>
<feature type="chain" id="PRO_0000205352" description="Uncharacterized protein SCO4941">
    <location>
        <begin position="1"/>
        <end position="105"/>
    </location>
</feature>
<feature type="region of interest" description="Disordered" evidence="1">
    <location>
        <begin position="29"/>
        <end position="55"/>
    </location>
</feature>
<feature type="region of interest" description="Disordered" evidence="1">
    <location>
        <begin position="72"/>
        <end position="105"/>
    </location>
</feature>
<feature type="compositionally biased region" description="Basic and acidic residues" evidence="1">
    <location>
        <begin position="72"/>
        <end position="81"/>
    </location>
</feature>
<name>Y4941_STRCO</name>
<evidence type="ECO:0000256" key="1">
    <source>
        <dbReference type="SAM" id="MobiDB-lite"/>
    </source>
</evidence>
<dbReference type="EMBL" id="AL939122">
    <property type="protein sequence ID" value="CAC21613.2"/>
    <property type="molecule type" value="Genomic_DNA"/>
</dbReference>
<dbReference type="RefSeq" id="NP_629093.1">
    <property type="nucleotide sequence ID" value="NC_003888.3"/>
</dbReference>
<dbReference type="RefSeq" id="WP_011029964.1">
    <property type="nucleotide sequence ID" value="NZ_VNID01000027.1"/>
</dbReference>
<dbReference type="SMR" id="Q9EWW3"/>
<dbReference type="STRING" id="100226.gene:17762590"/>
<dbReference type="PaxDb" id="100226-SCO4941"/>
<dbReference type="KEGG" id="sco:SCO4941"/>
<dbReference type="PATRIC" id="fig|100226.15.peg.5021"/>
<dbReference type="HOGENOM" id="CLU_2234976_0_0_11"/>
<dbReference type="InParanoid" id="Q9EWW3"/>
<dbReference type="OrthoDB" id="3211521at2"/>
<dbReference type="Proteomes" id="UP000001973">
    <property type="component" value="Chromosome"/>
</dbReference>
<dbReference type="GO" id="GO:0016989">
    <property type="term" value="F:sigma factor antagonist activity"/>
    <property type="evidence" value="ECO:0000318"/>
    <property type="project" value="GO_Central"/>
</dbReference>
<dbReference type="GO" id="GO:0045892">
    <property type="term" value="P:negative regulation of DNA-templated transcription"/>
    <property type="evidence" value="ECO:0000318"/>
    <property type="project" value="GO_Central"/>
</dbReference>
<dbReference type="CDD" id="cd16936">
    <property type="entry name" value="HATPase_RsbW-like"/>
    <property type="match status" value="1"/>
</dbReference>
<dbReference type="Gene3D" id="3.30.565.10">
    <property type="entry name" value="Histidine kinase-like ATPase, C-terminal domain"/>
    <property type="match status" value="1"/>
</dbReference>
<dbReference type="InterPro" id="IPR050267">
    <property type="entry name" value="Anti-sigma-factor_SerPK"/>
</dbReference>
<dbReference type="InterPro" id="IPR036890">
    <property type="entry name" value="HATPase_C_sf"/>
</dbReference>
<dbReference type="PANTHER" id="PTHR35526:SF3">
    <property type="entry name" value="ANTI-SIGMA-F FACTOR RSBW"/>
    <property type="match status" value="1"/>
</dbReference>
<dbReference type="PANTHER" id="PTHR35526">
    <property type="entry name" value="ANTI-SIGMA-F FACTOR RSBW-RELATED"/>
    <property type="match status" value="1"/>
</dbReference>
<reference key="1">
    <citation type="journal article" date="2002" name="Nature">
        <title>Complete genome sequence of the model actinomycete Streptomyces coelicolor A3(2).</title>
        <authorList>
            <person name="Bentley S.D."/>
            <person name="Chater K.F."/>
            <person name="Cerdeno-Tarraga A.-M."/>
            <person name="Challis G.L."/>
            <person name="Thomson N.R."/>
            <person name="James K.D."/>
            <person name="Harris D.E."/>
            <person name="Quail M.A."/>
            <person name="Kieser H."/>
            <person name="Harper D."/>
            <person name="Bateman A."/>
            <person name="Brown S."/>
            <person name="Chandra G."/>
            <person name="Chen C.W."/>
            <person name="Collins M."/>
            <person name="Cronin A."/>
            <person name="Fraser A."/>
            <person name="Goble A."/>
            <person name="Hidalgo J."/>
            <person name="Hornsby T."/>
            <person name="Howarth S."/>
            <person name="Huang C.-H."/>
            <person name="Kieser T."/>
            <person name="Larke L."/>
            <person name="Murphy L.D."/>
            <person name="Oliver K."/>
            <person name="O'Neil S."/>
            <person name="Rabbinowitsch E."/>
            <person name="Rajandream M.A."/>
            <person name="Rutherford K.M."/>
            <person name="Rutter S."/>
            <person name="Seeger K."/>
            <person name="Saunders D."/>
            <person name="Sharp S."/>
            <person name="Squares R."/>
            <person name="Squares S."/>
            <person name="Taylor K."/>
            <person name="Warren T."/>
            <person name="Wietzorrek A."/>
            <person name="Woodward J.R."/>
            <person name="Barrell B.G."/>
            <person name="Parkhill J."/>
            <person name="Hopwood D.A."/>
        </authorList>
    </citation>
    <scope>NUCLEOTIDE SEQUENCE [LARGE SCALE GENOMIC DNA]</scope>
    <source>
        <strain>ATCC BAA-471 / A3(2) / M145</strain>
    </source>
</reference>
<protein>
    <recommendedName>
        <fullName>Uncharacterized protein SCO4941</fullName>
    </recommendedName>
</protein>
<keyword id="KW-1185">Reference proteome</keyword>
<organism>
    <name type="scientific">Streptomyces coelicolor (strain ATCC BAA-471 / A3(2) / M145)</name>
    <dbReference type="NCBI Taxonomy" id="100226"/>
    <lineage>
        <taxon>Bacteria</taxon>
        <taxon>Bacillati</taxon>
        <taxon>Actinomycetota</taxon>
        <taxon>Actinomycetes</taxon>
        <taxon>Kitasatosporales</taxon>
        <taxon>Streptomycetaceae</taxon>
        <taxon>Streptomyces</taxon>
        <taxon>Streptomyces albidoflavus group</taxon>
    </lineage>
</organism>
<accession>Q9EWW3</accession>
<proteinExistence type="predicted"/>
<sequence>MTEALTHVIDHEGQGTPATVRLTVLPSGHTRVGVTDPDPRVPPLLPGPAGVTDESGRGLALLDAPAPRWGVEQRGDRRAVRCEPAGEPPLDDVRTPAAPAVRSGR</sequence>